<evidence type="ECO:0000250" key="1"/>
<evidence type="ECO:0000305" key="2"/>
<accession>P64390</accession>
<accession>Q8YGI0</accession>
<sequence length="107" mass="11972">MGGKTVTRADLAEAVYRKVGLSRTESAALVEMILDEVCDAIVNGETVKLSSFATFQVRDKNERIGRNPKTGEEVPILPRRVMTFKASNVLKQRILQEHQKRQGKTSK</sequence>
<feature type="chain" id="PRO_0000105001" description="Integration host factor subunit alpha">
    <location>
        <begin position="1"/>
        <end position="107"/>
    </location>
</feature>
<comment type="function">
    <text evidence="1">This protein is one of the two subunits of integration host factor, a specific DNA-binding protein that functions in genetic recombination as well as in transcriptional and translational control.</text>
</comment>
<comment type="subunit">
    <text evidence="1">Heterodimer of an alpha and a beta chain.</text>
</comment>
<comment type="similarity">
    <text evidence="2">Belongs to the bacterial histone-like protein family.</text>
</comment>
<comment type="sequence caution" evidence="2">
    <conflict type="erroneous initiation">
        <sequence resource="EMBL-CDS" id="AAL52360"/>
    </conflict>
</comment>
<organism>
    <name type="scientific">Brucella melitensis biotype 1 (strain ATCC 23456 / CCUG 17765 / NCTC 10094 / 16M)</name>
    <dbReference type="NCBI Taxonomy" id="224914"/>
    <lineage>
        <taxon>Bacteria</taxon>
        <taxon>Pseudomonadati</taxon>
        <taxon>Pseudomonadota</taxon>
        <taxon>Alphaproteobacteria</taxon>
        <taxon>Hyphomicrobiales</taxon>
        <taxon>Brucellaceae</taxon>
        <taxon>Brucella/Ochrobactrum group</taxon>
        <taxon>Brucella</taxon>
    </lineage>
</organism>
<gene>
    <name type="primary">ihfA</name>
    <name type="synonym">himA</name>
    <name type="ordered locus">BMEI1179</name>
</gene>
<reference key="1">
    <citation type="journal article" date="2002" name="Proc. Natl. Acad. Sci. U.S.A.">
        <title>The genome sequence of the facultative intracellular pathogen Brucella melitensis.</title>
        <authorList>
            <person name="DelVecchio V.G."/>
            <person name="Kapatral V."/>
            <person name="Redkar R.J."/>
            <person name="Patra G."/>
            <person name="Mujer C."/>
            <person name="Los T."/>
            <person name="Ivanova N."/>
            <person name="Anderson I."/>
            <person name="Bhattacharyya A."/>
            <person name="Lykidis A."/>
            <person name="Reznik G."/>
            <person name="Jablonski L."/>
            <person name="Larsen N."/>
            <person name="D'Souza M."/>
            <person name="Bernal A."/>
            <person name="Mazur M."/>
            <person name="Goltsman E."/>
            <person name="Selkov E."/>
            <person name="Elzer P.H."/>
            <person name="Hagius S."/>
            <person name="O'Callaghan D."/>
            <person name="Letesson J.-J."/>
            <person name="Haselkorn R."/>
            <person name="Kyrpides N.C."/>
            <person name="Overbeek R."/>
        </authorList>
    </citation>
    <scope>NUCLEOTIDE SEQUENCE [LARGE SCALE GENOMIC DNA]</scope>
    <source>
        <strain>ATCC 23456 / CCUG 17765 / NCTC 10094 / 16M</strain>
    </source>
</reference>
<dbReference type="EMBL" id="AE008917">
    <property type="protein sequence ID" value="AAL52360.1"/>
    <property type="status" value="ALT_INIT"/>
    <property type="molecule type" value="Genomic_DNA"/>
</dbReference>
<dbReference type="PIR" id="AE3399">
    <property type="entry name" value="AE3399"/>
</dbReference>
<dbReference type="RefSeq" id="WP_002963914.1">
    <property type="nucleotide sequence ID" value="NZ_GG703778.1"/>
</dbReference>
<dbReference type="SMR" id="P64390"/>
<dbReference type="KEGG" id="bme:BMEI1179"/>
<dbReference type="KEGG" id="bmel:DK63_230"/>
<dbReference type="PATRIC" id="fig|224914.52.peg.238"/>
<dbReference type="eggNOG" id="COG0776">
    <property type="taxonomic scope" value="Bacteria"/>
</dbReference>
<dbReference type="PhylomeDB" id="P64390"/>
<dbReference type="Proteomes" id="UP000000419">
    <property type="component" value="Chromosome I"/>
</dbReference>
<dbReference type="GO" id="GO:0005829">
    <property type="term" value="C:cytosol"/>
    <property type="evidence" value="ECO:0007669"/>
    <property type="project" value="TreeGrafter"/>
</dbReference>
<dbReference type="GO" id="GO:0003677">
    <property type="term" value="F:DNA binding"/>
    <property type="evidence" value="ECO:0007669"/>
    <property type="project" value="UniProtKB-UniRule"/>
</dbReference>
<dbReference type="GO" id="GO:0030527">
    <property type="term" value="F:structural constituent of chromatin"/>
    <property type="evidence" value="ECO:0007669"/>
    <property type="project" value="InterPro"/>
</dbReference>
<dbReference type="GO" id="GO:0006310">
    <property type="term" value="P:DNA recombination"/>
    <property type="evidence" value="ECO:0007669"/>
    <property type="project" value="UniProtKB-UniRule"/>
</dbReference>
<dbReference type="GO" id="GO:0009893">
    <property type="term" value="P:positive regulation of metabolic process"/>
    <property type="evidence" value="ECO:0007669"/>
    <property type="project" value="UniProtKB-ARBA"/>
</dbReference>
<dbReference type="GO" id="GO:0006355">
    <property type="term" value="P:regulation of DNA-templated transcription"/>
    <property type="evidence" value="ECO:0007669"/>
    <property type="project" value="UniProtKB-UniRule"/>
</dbReference>
<dbReference type="GO" id="GO:0006417">
    <property type="term" value="P:regulation of translation"/>
    <property type="evidence" value="ECO:0007669"/>
    <property type="project" value="UniProtKB-UniRule"/>
</dbReference>
<dbReference type="CDD" id="cd13835">
    <property type="entry name" value="IHF_A"/>
    <property type="match status" value="1"/>
</dbReference>
<dbReference type="Gene3D" id="4.10.520.10">
    <property type="entry name" value="IHF-like DNA-binding proteins"/>
    <property type="match status" value="1"/>
</dbReference>
<dbReference type="HAMAP" id="MF_00380">
    <property type="entry name" value="IHF_alpha"/>
    <property type="match status" value="1"/>
</dbReference>
<dbReference type="InterPro" id="IPR000119">
    <property type="entry name" value="Hist_DNA-bd"/>
</dbReference>
<dbReference type="InterPro" id="IPR020816">
    <property type="entry name" value="Histone-like_DNA-bd_CS"/>
</dbReference>
<dbReference type="InterPro" id="IPR010992">
    <property type="entry name" value="IHF-like_DNA-bd_dom_sf"/>
</dbReference>
<dbReference type="InterPro" id="IPR005684">
    <property type="entry name" value="IHF_alpha"/>
</dbReference>
<dbReference type="NCBIfam" id="TIGR00987">
    <property type="entry name" value="himA"/>
    <property type="match status" value="1"/>
</dbReference>
<dbReference type="NCBIfam" id="NF001401">
    <property type="entry name" value="PRK00285.1"/>
    <property type="match status" value="1"/>
</dbReference>
<dbReference type="PANTHER" id="PTHR33175">
    <property type="entry name" value="DNA-BINDING PROTEIN HU"/>
    <property type="match status" value="1"/>
</dbReference>
<dbReference type="PANTHER" id="PTHR33175:SF2">
    <property type="entry name" value="INTEGRATION HOST FACTOR SUBUNIT ALPHA"/>
    <property type="match status" value="1"/>
</dbReference>
<dbReference type="Pfam" id="PF00216">
    <property type="entry name" value="Bac_DNA_binding"/>
    <property type="match status" value="1"/>
</dbReference>
<dbReference type="PRINTS" id="PR01727">
    <property type="entry name" value="DNABINDINGHU"/>
</dbReference>
<dbReference type="SMART" id="SM00411">
    <property type="entry name" value="BHL"/>
    <property type="match status" value="1"/>
</dbReference>
<dbReference type="SUPFAM" id="SSF47729">
    <property type="entry name" value="IHF-like DNA-binding proteins"/>
    <property type="match status" value="1"/>
</dbReference>
<dbReference type="PROSITE" id="PS00045">
    <property type="entry name" value="HISTONE_LIKE"/>
    <property type="match status" value="1"/>
</dbReference>
<proteinExistence type="inferred from homology"/>
<keyword id="KW-0233">DNA recombination</keyword>
<keyword id="KW-0238">DNA-binding</keyword>
<keyword id="KW-0804">Transcription</keyword>
<keyword id="KW-0805">Transcription regulation</keyword>
<keyword id="KW-0810">Translation regulation</keyword>
<name>IHFA_BRUME</name>
<protein>
    <recommendedName>
        <fullName>Integration host factor subunit alpha</fullName>
        <shortName>IHF-alpha</shortName>
    </recommendedName>
</protein>